<evidence type="ECO:0000250" key="1"/>
<evidence type="ECO:0000255" key="2">
    <source>
        <dbReference type="PROSITE-ProRule" id="PRU00532"/>
    </source>
</evidence>
<evidence type="ECO:0000305" key="3"/>
<keyword id="KW-0012">Acyltransferase</keyword>
<keyword id="KW-0808">Transferase</keyword>
<name>PSEH_CAMJJ</name>
<accession>A1W0U7</accession>
<accession>Q2M5R3</accession>
<proteinExistence type="inferred from homology"/>
<gene>
    <name type="primary">pseH</name>
    <name type="ordered locus">CJJ81176_1330</name>
</gene>
<organism>
    <name type="scientific">Campylobacter jejuni subsp. jejuni serotype O:23/36 (strain 81-176)</name>
    <dbReference type="NCBI Taxonomy" id="354242"/>
    <lineage>
        <taxon>Bacteria</taxon>
        <taxon>Pseudomonadati</taxon>
        <taxon>Campylobacterota</taxon>
        <taxon>Epsilonproteobacteria</taxon>
        <taxon>Campylobacterales</taxon>
        <taxon>Campylobacteraceae</taxon>
        <taxon>Campylobacter</taxon>
    </lineage>
</organism>
<sequence>MIKLKNFTELNSQEIELIFKWRNHPDINQFMKTKYIDFEEHLRFLKKLHQDSSKKYFLVFQDEQIIGVIDFVNITTKSCEFGLYAKPNLKGVGQILMNEIIKYAFENLKVNTLKAYVFKDNRKALKLYQQNHFTIYDEDKDFYHICLKQSDCKALPS</sequence>
<dbReference type="EC" id="2.3.1.-"/>
<dbReference type="EMBL" id="AY102622">
    <property type="protein sequence ID" value="ABC69289.1"/>
    <property type="status" value="ALT_INIT"/>
    <property type="molecule type" value="Genomic_DNA"/>
</dbReference>
<dbReference type="EMBL" id="CP000538">
    <property type="protein sequence ID" value="EAQ72810.1"/>
    <property type="molecule type" value="Genomic_DNA"/>
</dbReference>
<dbReference type="RefSeq" id="WP_002781802.1">
    <property type="nucleotide sequence ID" value="NC_008787.1"/>
</dbReference>
<dbReference type="SMR" id="A1W0U7"/>
<dbReference type="GeneID" id="66543716"/>
<dbReference type="KEGG" id="cjj:CJJ81176_1330"/>
<dbReference type="eggNOG" id="COG1670">
    <property type="taxonomic scope" value="Bacteria"/>
</dbReference>
<dbReference type="HOGENOM" id="CLU_013985_20_1_7"/>
<dbReference type="Proteomes" id="UP000000646">
    <property type="component" value="Chromosome"/>
</dbReference>
<dbReference type="GO" id="GO:0016747">
    <property type="term" value="F:acyltransferase activity, transferring groups other than amino-acyl groups"/>
    <property type="evidence" value="ECO:0007669"/>
    <property type="project" value="InterPro"/>
</dbReference>
<dbReference type="CDD" id="cd04301">
    <property type="entry name" value="NAT_SF"/>
    <property type="match status" value="1"/>
</dbReference>
<dbReference type="Gene3D" id="3.40.630.30">
    <property type="match status" value="1"/>
</dbReference>
<dbReference type="InterPro" id="IPR016181">
    <property type="entry name" value="Acyl_CoA_acyltransferase"/>
</dbReference>
<dbReference type="InterPro" id="IPR000182">
    <property type="entry name" value="GNAT_dom"/>
</dbReference>
<dbReference type="InterPro" id="IPR020036">
    <property type="entry name" value="PseH"/>
</dbReference>
<dbReference type="NCBIfam" id="TIGR03585">
    <property type="entry name" value="PseH"/>
    <property type="match status" value="1"/>
</dbReference>
<dbReference type="PANTHER" id="PTHR43415:SF3">
    <property type="entry name" value="GNAT-FAMILY ACETYLTRANSFERASE"/>
    <property type="match status" value="1"/>
</dbReference>
<dbReference type="PANTHER" id="PTHR43415">
    <property type="entry name" value="SPERMIDINE N(1)-ACETYLTRANSFERASE"/>
    <property type="match status" value="1"/>
</dbReference>
<dbReference type="Pfam" id="PF13302">
    <property type="entry name" value="Acetyltransf_3"/>
    <property type="match status" value="1"/>
</dbReference>
<dbReference type="SUPFAM" id="SSF55729">
    <property type="entry name" value="Acyl-CoA N-acyltransferases (Nat)"/>
    <property type="match status" value="1"/>
</dbReference>
<dbReference type="PROSITE" id="PS51186">
    <property type="entry name" value="GNAT"/>
    <property type="match status" value="1"/>
</dbReference>
<feature type="chain" id="PRO_0000418963" description="Acetyltransferase PseH">
    <location>
        <begin position="1"/>
        <end position="157"/>
    </location>
</feature>
<feature type="domain" description="N-acetyltransferase" evidence="2">
    <location>
        <begin position="5"/>
        <end position="152"/>
    </location>
</feature>
<protein>
    <recommendedName>
        <fullName>Acetyltransferase PseH</fullName>
        <ecNumber>2.3.1.-</ecNumber>
    </recommendedName>
    <alternativeName>
        <fullName>Pseudaminic acid biosynthesis protein H</fullName>
    </alternativeName>
</protein>
<reference key="1">
    <citation type="journal article" date="2001" name="J. Biol. Chem.">
        <title>Identification of the carbohydrate moieties and glycosylation motifs in Campylobacter jejuni flagellin.</title>
        <authorList>
            <person name="Thibault P."/>
            <person name="Logan S.M."/>
            <person name="Kelly J.F."/>
            <person name="Brisson J.-R."/>
            <person name="Ewing C.P."/>
            <person name="Trust T.J."/>
            <person name="Guerry P."/>
        </authorList>
    </citation>
    <scope>NUCLEOTIDE SEQUENCE [GENOMIC DNA]</scope>
    <source>
        <strain>81-176</strain>
    </source>
</reference>
<reference key="2">
    <citation type="submission" date="2006-12" db="EMBL/GenBank/DDBJ databases">
        <authorList>
            <person name="Fouts D.E."/>
            <person name="Nelson K.E."/>
            <person name="Sebastian Y."/>
        </authorList>
    </citation>
    <scope>NUCLEOTIDE SEQUENCE [LARGE SCALE GENOMIC DNA]</scope>
    <source>
        <strain>81-176</strain>
    </source>
</reference>
<reference key="3">
    <citation type="journal article" date="2006" name="J. Biol. Chem.">
        <title>Functional characterization of the flagellar glycosylation locus in Campylobacter jejuni 81-176 using a focused metabolomics approach.</title>
        <authorList>
            <person name="McNally D.J."/>
            <person name="Hui J.P."/>
            <person name="Aubry A.J."/>
            <person name="Mui K.K."/>
            <person name="Guerry P."/>
            <person name="Brisson J.R."/>
            <person name="Logan S.M."/>
            <person name="Soo E.C."/>
        </authorList>
    </citation>
    <scope>IDENTIFICATION</scope>
    <source>
        <strain>81-176</strain>
    </source>
</reference>
<comment type="function">
    <text evidence="1">Catalyzes the third step in the biosynthesis of pseudaminic acid, a sialic-acid-like sugar that is used to modify flagellin. Mediates N-4 acetylation of UDP-4-amino-4,6-dideoxy-beta-L-AltNAc to form UDP-2,4-diacetamido-2,4,6-trideoxy-beta-L-altropyranose (By similarity).</text>
</comment>
<comment type="sequence caution" evidence="3">
    <conflict type="erroneous initiation">
        <sequence resource="EMBL-CDS" id="ABC69289"/>
    </conflict>
    <text>Truncated N-terminus.</text>
</comment>